<protein>
    <recommendedName>
        <fullName evidence="1">Sec-independent protein translocase protein TatA</fullName>
    </recommendedName>
</protein>
<feature type="chain" id="PRO_1000197864" description="Sec-independent protein translocase protein TatA">
    <location>
        <begin position="1"/>
        <end position="70"/>
    </location>
</feature>
<feature type="transmembrane region" description="Helical" evidence="1">
    <location>
        <begin position="1"/>
        <end position="21"/>
    </location>
</feature>
<feature type="region of interest" description="Disordered" evidence="2">
    <location>
        <begin position="50"/>
        <end position="70"/>
    </location>
</feature>
<feature type="compositionally biased region" description="Basic and acidic residues" evidence="2">
    <location>
        <begin position="50"/>
        <end position="62"/>
    </location>
</feature>
<reference key="1">
    <citation type="submission" date="2008-05" db="EMBL/GenBank/DDBJ databases">
        <title>Complete sequence of Chlorobium limicola DSM 245.</title>
        <authorList>
            <consortium name="US DOE Joint Genome Institute"/>
            <person name="Lucas S."/>
            <person name="Copeland A."/>
            <person name="Lapidus A."/>
            <person name="Glavina del Rio T."/>
            <person name="Dalin E."/>
            <person name="Tice H."/>
            <person name="Bruce D."/>
            <person name="Goodwin L."/>
            <person name="Pitluck S."/>
            <person name="Schmutz J."/>
            <person name="Larimer F."/>
            <person name="Land M."/>
            <person name="Hauser L."/>
            <person name="Kyrpides N."/>
            <person name="Ovchinnikova G."/>
            <person name="Zhao F."/>
            <person name="Li T."/>
            <person name="Liu Z."/>
            <person name="Overmann J."/>
            <person name="Bryant D.A."/>
            <person name="Richardson P."/>
        </authorList>
    </citation>
    <scope>NUCLEOTIDE SEQUENCE [LARGE SCALE GENOMIC DNA]</scope>
    <source>
        <strain>DSM 245 / NBRC 103803 / 6330</strain>
    </source>
</reference>
<organism>
    <name type="scientific">Chlorobium limicola (strain DSM 245 / NBRC 103803 / 6330)</name>
    <dbReference type="NCBI Taxonomy" id="290315"/>
    <lineage>
        <taxon>Bacteria</taxon>
        <taxon>Pseudomonadati</taxon>
        <taxon>Chlorobiota</taxon>
        <taxon>Chlorobiia</taxon>
        <taxon>Chlorobiales</taxon>
        <taxon>Chlorobiaceae</taxon>
        <taxon>Chlorobium/Pelodictyon group</taxon>
        <taxon>Chlorobium</taxon>
    </lineage>
</organism>
<evidence type="ECO:0000255" key="1">
    <source>
        <dbReference type="HAMAP-Rule" id="MF_00236"/>
    </source>
</evidence>
<evidence type="ECO:0000256" key="2">
    <source>
        <dbReference type="SAM" id="MobiDB-lite"/>
    </source>
</evidence>
<accession>B3EH31</accession>
<keyword id="KW-0997">Cell inner membrane</keyword>
<keyword id="KW-1003">Cell membrane</keyword>
<keyword id="KW-0472">Membrane</keyword>
<keyword id="KW-0653">Protein transport</keyword>
<keyword id="KW-0811">Translocation</keyword>
<keyword id="KW-0812">Transmembrane</keyword>
<keyword id="KW-1133">Transmembrane helix</keyword>
<keyword id="KW-0813">Transport</keyword>
<dbReference type="EMBL" id="CP001097">
    <property type="protein sequence ID" value="ACD89711.1"/>
    <property type="molecule type" value="Genomic_DNA"/>
</dbReference>
<dbReference type="RefSeq" id="WP_012465592.1">
    <property type="nucleotide sequence ID" value="NC_010803.1"/>
</dbReference>
<dbReference type="SMR" id="B3EH31"/>
<dbReference type="STRING" id="290315.Clim_0624"/>
<dbReference type="KEGG" id="cli:Clim_0624"/>
<dbReference type="eggNOG" id="COG1826">
    <property type="taxonomic scope" value="Bacteria"/>
</dbReference>
<dbReference type="HOGENOM" id="CLU_086034_6_0_10"/>
<dbReference type="OrthoDB" id="9812812at2"/>
<dbReference type="Proteomes" id="UP000008841">
    <property type="component" value="Chromosome"/>
</dbReference>
<dbReference type="GO" id="GO:0033281">
    <property type="term" value="C:TAT protein transport complex"/>
    <property type="evidence" value="ECO:0007669"/>
    <property type="project" value="UniProtKB-UniRule"/>
</dbReference>
<dbReference type="GO" id="GO:0008320">
    <property type="term" value="F:protein transmembrane transporter activity"/>
    <property type="evidence" value="ECO:0007669"/>
    <property type="project" value="UniProtKB-UniRule"/>
</dbReference>
<dbReference type="GO" id="GO:0043953">
    <property type="term" value="P:protein transport by the Tat complex"/>
    <property type="evidence" value="ECO:0007669"/>
    <property type="project" value="UniProtKB-UniRule"/>
</dbReference>
<dbReference type="Gene3D" id="1.20.5.3310">
    <property type="match status" value="1"/>
</dbReference>
<dbReference type="HAMAP" id="MF_00236">
    <property type="entry name" value="TatA_E"/>
    <property type="match status" value="1"/>
</dbReference>
<dbReference type="InterPro" id="IPR003369">
    <property type="entry name" value="TatA/B/E"/>
</dbReference>
<dbReference type="InterPro" id="IPR006312">
    <property type="entry name" value="TatA/E"/>
</dbReference>
<dbReference type="NCBIfam" id="TIGR01411">
    <property type="entry name" value="tatAE"/>
    <property type="match status" value="1"/>
</dbReference>
<dbReference type="PANTHER" id="PTHR42982">
    <property type="entry name" value="SEC-INDEPENDENT PROTEIN TRANSLOCASE PROTEIN TATA"/>
    <property type="match status" value="1"/>
</dbReference>
<dbReference type="PANTHER" id="PTHR42982:SF1">
    <property type="entry name" value="SEC-INDEPENDENT PROTEIN TRANSLOCASE PROTEIN TATA"/>
    <property type="match status" value="1"/>
</dbReference>
<dbReference type="Pfam" id="PF02416">
    <property type="entry name" value="TatA_B_E"/>
    <property type="match status" value="1"/>
</dbReference>
<dbReference type="PRINTS" id="PR01506">
    <property type="entry name" value="TATBPROTEIN"/>
</dbReference>
<gene>
    <name evidence="1" type="primary">tatA</name>
    <name type="ordered locus">Clim_0624</name>
</gene>
<proteinExistence type="inferred from homology"/>
<comment type="function">
    <text evidence="1">Part of the twin-arginine translocation (Tat) system that transports large folded proteins containing a characteristic twin-arginine motif in their signal peptide across membranes. TatA could form the protein-conducting channel of the Tat system.</text>
</comment>
<comment type="subunit">
    <text evidence="1">Forms a complex with TatC.</text>
</comment>
<comment type="subcellular location">
    <subcellularLocation>
        <location evidence="1">Cell inner membrane</location>
        <topology evidence="1">Single-pass membrane protein</topology>
    </subcellularLocation>
</comment>
<comment type="similarity">
    <text evidence="1">Belongs to the TatA/E family.</text>
</comment>
<sequence>MFGLGGQELILILLIILLLFGAKKLPELARGLGKGMKEFKKAQTEIEDEFNKVVDEPPRKTPENSTGSKS</sequence>
<name>TATA_CHLL2</name>